<reference key="1">
    <citation type="submission" date="2008-08" db="EMBL/GenBank/DDBJ databases">
        <title>Complete sequence of Acidithiobacillus ferrooxidans ATCC 53993.</title>
        <authorList>
            <person name="Lucas S."/>
            <person name="Copeland A."/>
            <person name="Lapidus A."/>
            <person name="Glavina del Rio T."/>
            <person name="Dalin E."/>
            <person name="Tice H."/>
            <person name="Bruce D."/>
            <person name="Goodwin L."/>
            <person name="Pitluck S."/>
            <person name="Sims D."/>
            <person name="Brettin T."/>
            <person name="Detter J.C."/>
            <person name="Han C."/>
            <person name="Kuske C.R."/>
            <person name="Larimer F."/>
            <person name="Land M."/>
            <person name="Hauser L."/>
            <person name="Kyrpides N."/>
            <person name="Lykidis A."/>
            <person name="Borole A.P."/>
        </authorList>
    </citation>
    <scope>NUCLEOTIDE SEQUENCE [LARGE SCALE GENOMIC DNA]</scope>
    <source>
        <strain>ATCC 53993 / BNL-5-31</strain>
    </source>
</reference>
<proteinExistence type="inferred from homology"/>
<evidence type="ECO:0000255" key="1">
    <source>
        <dbReference type="HAMAP-Rule" id="MF_00281"/>
    </source>
</evidence>
<accession>B5EN53</accession>
<organism>
    <name type="scientific">Acidithiobacillus ferrooxidans (strain ATCC 53993 / BNL-5-31)</name>
    <name type="common">Leptospirillum ferrooxidans (ATCC 53993)</name>
    <dbReference type="NCBI Taxonomy" id="380394"/>
    <lineage>
        <taxon>Bacteria</taxon>
        <taxon>Pseudomonadati</taxon>
        <taxon>Pseudomonadota</taxon>
        <taxon>Acidithiobacillia</taxon>
        <taxon>Acidithiobacillales</taxon>
        <taxon>Acidithiobacillaceae</taxon>
        <taxon>Acidithiobacillus</taxon>
    </lineage>
</organism>
<dbReference type="EC" id="6.1.1.20" evidence="1"/>
<dbReference type="EMBL" id="CP001132">
    <property type="protein sequence ID" value="ACH84442.1"/>
    <property type="molecule type" value="Genomic_DNA"/>
</dbReference>
<dbReference type="RefSeq" id="WP_012537290.1">
    <property type="nucleotide sequence ID" value="NC_011206.1"/>
</dbReference>
<dbReference type="SMR" id="B5EN53"/>
<dbReference type="GeneID" id="65281660"/>
<dbReference type="KEGG" id="afe:Lferr_2239"/>
<dbReference type="eggNOG" id="COG0016">
    <property type="taxonomic scope" value="Bacteria"/>
</dbReference>
<dbReference type="HOGENOM" id="CLU_025086_0_1_6"/>
<dbReference type="GO" id="GO:0005737">
    <property type="term" value="C:cytoplasm"/>
    <property type="evidence" value="ECO:0007669"/>
    <property type="project" value="UniProtKB-SubCell"/>
</dbReference>
<dbReference type="GO" id="GO:0005524">
    <property type="term" value="F:ATP binding"/>
    <property type="evidence" value="ECO:0007669"/>
    <property type="project" value="UniProtKB-UniRule"/>
</dbReference>
<dbReference type="GO" id="GO:0000287">
    <property type="term" value="F:magnesium ion binding"/>
    <property type="evidence" value="ECO:0007669"/>
    <property type="project" value="UniProtKB-UniRule"/>
</dbReference>
<dbReference type="GO" id="GO:0004826">
    <property type="term" value="F:phenylalanine-tRNA ligase activity"/>
    <property type="evidence" value="ECO:0007669"/>
    <property type="project" value="UniProtKB-UniRule"/>
</dbReference>
<dbReference type="GO" id="GO:0000049">
    <property type="term" value="F:tRNA binding"/>
    <property type="evidence" value="ECO:0007669"/>
    <property type="project" value="InterPro"/>
</dbReference>
<dbReference type="GO" id="GO:0006432">
    <property type="term" value="P:phenylalanyl-tRNA aminoacylation"/>
    <property type="evidence" value="ECO:0007669"/>
    <property type="project" value="UniProtKB-UniRule"/>
</dbReference>
<dbReference type="CDD" id="cd00496">
    <property type="entry name" value="PheRS_alpha_core"/>
    <property type="match status" value="1"/>
</dbReference>
<dbReference type="FunFam" id="3.30.930.10:FF:000003">
    <property type="entry name" value="Phenylalanine--tRNA ligase alpha subunit"/>
    <property type="match status" value="1"/>
</dbReference>
<dbReference type="Gene3D" id="3.30.930.10">
    <property type="entry name" value="Bira Bifunctional Protein, Domain 2"/>
    <property type="match status" value="1"/>
</dbReference>
<dbReference type="HAMAP" id="MF_00281">
    <property type="entry name" value="Phe_tRNA_synth_alpha1"/>
    <property type="match status" value="1"/>
</dbReference>
<dbReference type="InterPro" id="IPR006195">
    <property type="entry name" value="aa-tRNA-synth_II"/>
</dbReference>
<dbReference type="InterPro" id="IPR045864">
    <property type="entry name" value="aa-tRNA-synth_II/BPL/LPL"/>
</dbReference>
<dbReference type="InterPro" id="IPR004529">
    <property type="entry name" value="Phe-tRNA-synth_IIc_asu"/>
</dbReference>
<dbReference type="InterPro" id="IPR004188">
    <property type="entry name" value="Phe-tRNA_ligase_II_N"/>
</dbReference>
<dbReference type="InterPro" id="IPR022911">
    <property type="entry name" value="Phe_tRNA_ligase_alpha1_bac"/>
</dbReference>
<dbReference type="InterPro" id="IPR002319">
    <property type="entry name" value="Phenylalanyl-tRNA_Synthase"/>
</dbReference>
<dbReference type="InterPro" id="IPR010978">
    <property type="entry name" value="tRNA-bd_arm"/>
</dbReference>
<dbReference type="NCBIfam" id="TIGR00468">
    <property type="entry name" value="pheS"/>
    <property type="match status" value="1"/>
</dbReference>
<dbReference type="PANTHER" id="PTHR11538:SF41">
    <property type="entry name" value="PHENYLALANINE--TRNA LIGASE, MITOCHONDRIAL"/>
    <property type="match status" value="1"/>
</dbReference>
<dbReference type="PANTHER" id="PTHR11538">
    <property type="entry name" value="PHENYLALANYL-TRNA SYNTHETASE"/>
    <property type="match status" value="1"/>
</dbReference>
<dbReference type="Pfam" id="PF02912">
    <property type="entry name" value="Phe_tRNA-synt_N"/>
    <property type="match status" value="1"/>
</dbReference>
<dbReference type="Pfam" id="PF01409">
    <property type="entry name" value="tRNA-synt_2d"/>
    <property type="match status" value="1"/>
</dbReference>
<dbReference type="SUPFAM" id="SSF55681">
    <property type="entry name" value="Class II aaRS and biotin synthetases"/>
    <property type="match status" value="1"/>
</dbReference>
<dbReference type="SUPFAM" id="SSF46589">
    <property type="entry name" value="tRNA-binding arm"/>
    <property type="match status" value="1"/>
</dbReference>
<dbReference type="PROSITE" id="PS50862">
    <property type="entry name" value="AA_TRNA_LIGASE_II"/>
    <property type="match status" value="1"/>
</dbReference>
<comment type="catalytic activity">
    <reaction evidence="1">
        <text>tRNA(Phe) + L-phenylalanine + ATP = L-phenylalanyl-tRNA(Phe) + AMP + diphosphate + H(+)</text>
        <dbReference type="Rhea" id="RHEA:19413"/>
        <dbReference type="Rhea" id="RHEA-COMP:9668"/>
        <dbReference type="Rhea" id="RHEA-COMP:9699"/>
        <dbReference type="ChEBI" id="CHEBI:15378"/>
        <dbReference type="ChEBI" id="CHEBI:30616"/>
        <dbReference type="ChEBI" id="CHEBI:33019"/>
        <dbReference type="ChEBI" id="CHEBI:58095"/>
        <dbReference type="ChEBI" id="CHEBI:78442"/>
        <dbReference type="ChEBI" id="CHEBI:78531"/>
        <dbReference type="ChEBI" id="CHEBI:456215"/>
        <dbReference type="EC" id="6.1.1.20"/>
    </reaction>
</comment>
<comment type="cofactor">
    <cofactor evidence="1">
        <name>Mg(2+)</name>
        <dbReference type="ChEBI" id="CHEBI:18420"/>
    </cofactor>
    <text evidence="1">Binds 2 magnesium ions per tetramer.</text>
</comment>
<comment type="subunit">
    <text evidence="1">Tetramer of two alpha and two beta subunits.</text>
</comment>
<comment type="subcellular location">
    <subcellularLocation>
        <location evidence="1">Cytoplasm</location>
    </subcellularLocation>
</comment>
<comment type="similarity">
    <text evidence="1">Belongs to the class-II aminoacyl-tRNA synthetase family. Phe-tRNA synthetase alpha subunit type 1 subfamily.</text>
</comment>
<protein>
    <recommendedName>
        <fullName evidence="1">Phenylalanine--tRNA ligase alpha subunit</fullName>
        <ecNumber evidence="1">6.1.1.20</ecNumber>
    </recommendedName>
    <alternativeName>
        <fullName evidence="1">Phenylalanyl-tRNA synthetase alpha subunit</fullName>
        <shortName evidence="1">PheRS</shortName>
    </alternativeName>
</protein>
<sequence>MSFQSMASIAEAAREVAAASDLNTLEQIRLRWLGRKGVLTEAMQQLGQLSPETRREAGQLLNERKSEIQSLLQERKAELEAAAIHARLQQERLDVTLPGRREACGSAHPIRQTLEWIEHYFFGLGFETSDGPEIEDDYHNFAALNIPEDHPARAMHDTFYLDATRLLRTQTSTVQIRFLESHQPPLRMIATGRVYRRDSDITHTPMFHQVEGLLLDERASFADLRGLLSDFLHGFFAKPDLPVRFRPSYFPFTEPSAEIDIGCVICGGSGCRVCKQTGWLEVLGCGMVHPAVLAGAGVDGERFSGFAFGMGVERLTMLRYGVNDLRLFFENDLRFLKQFS</sequence>
<keyword id="KW-0030">Aminoacyl-tRNA synthetase</keyword>
<keyword id="KW-0067">ATP-binding</keyword>
<keyword id="KW-0963">Cytoplasm</keyword>
<keyword id="KW-0436">Ligase</keyword>
<keyword id="KW-0460">Magnesium</keyword>
<keyword id="KW-0479">Metal-binding</keyword>
<keyword id="KW-0547">Nucleotide-binding</keyword>
<keyword id="KW-0648">Protein biosynthesis</keyword>
<feature type="chain" id="PRO_1000114841" description="Phenylalanine--tRNA ligase alpha subunit">
    <location>
        <begin position="1"/>
        <end position="340"/>
    </location>
</feature>
<feature type="binding site" evidence="1">
    <location>
        <position position="254"/>
    </location>
    <ligand>
        <name>Mg(2+)</name>
        <dbReference type="ChEBI" id="CHEBI:18420"/>
        <note>shared with beta subunit</note>
    </ligand>
</feature>
<gene>
    <name evidence="1" type="primary">pheS</name>
    <name type="ordered locus">Lferr_2239</name>
</gene>
<name>SYFA_ACIF5</name>